<protein>
    <recommendedName>
        <fullName evidence="2">D-alanine--D-alanine ligase</fullName>
        <ecNumber evidence="2">6.3.2.4</ecNumber>
    </recommendedName>
    <alternativeName>
        <fullName evidence="2">D-Ala-D-Ala ligase</fullName>
    </alternativeName>
    <alternativeName>
        <fullName evidence="2">D-alanylalanine synthetase</fullName>
    </alternativeName>
</protein>
<keyword id="KW-0067">ATP-binding</keyword>
<keyword id="KW-0133">Cell shape</keyword>
<keyword id="KW-0961">Cell wall biogenesis/degradation</keyword>
<keyword id="KW-0963">Cytoplasm</keyword>
<keyword id="KW-0436">Ligase</keyword>
<keyword id="KW-0460">Magnesium</keyword>
<keyword id="KW-0464">Manganese</keyword>
<keyword id="KW-0479">Metal-binding</keyword>
<keyword id="KW-0547">Nucleotide-binding</keyword>
<keyword id="KW-0573">Peptidoglycan synthesis</keyword>
<keyword id="KW-1185">Reference proteome</keyword>
<dbReference type="EC" id="6.3.2.4" evidence="2"/>
<dbReference type="EMBL" id="AE010300">
    <property type="protein sequence ID" value="AAN49258.1"/>
    <property type="molecule type" value="Genomic_DNA"/>
</dbReference>
<dbReference type="RefSeq" id="NP_712240.1">
    <property type="nucleotide sequence ID" value="NC_004342.2"/>
</dbReference>
<dbReference type="RefSeq" id="WP_001062349.1">
    <property type="nucleotide sequence ID" value="NC_004342.2"/>
</dbReference>
<dbReference type="SMR" id="Q8F4I2"/>
<dbReference type="FunCoup" id="Q8F4I2">
    <property type="interactions" value="248"/>
</dbReference>
<dbReference type="STRING" id="189518.LA_2058"/>
<dbReference type="PaxDb" id="189518-LA_2058"/>
<dbReference type="EnsemblBacteria" id="AAN49258">
    <property type="protein sequence ID" value="AAN49258"/>
    <property type="gene ID" value="LA_2058"/>
</dbReference>
<dbReference type="KEGG" id="lil:LA_2058"/>
<dbReference type="PATRIC" id="fig|189518.3.peg.2055"/>
<dbReference type="HOGENOM" id="CLU_039268_1_1_12"/>
<dbReference type="InParanoid" id="Q8F4I2"/>
<dbReference type="OrthoDB" id="9813261at2"/>
<dbReference type="UniPathway" id="UPA00219"/>
<dbReference type="Proteomes" id="UP000001408">
    <property type="component" value="Chromosome I"/>
</dbReference>
<dbReference type="GO" id="GO:0005737">
    <property type="term" value="C:cytoplasm"/>
    <property type="evidence" value="ECO:0007669"/>
    <property type="project" value="UniProtKB-SubCell"/>
</dbReference>
<dbReference type="GO" id="GO:0005524">
    <property type="term" value="F:ATP binding"/>
    <property type="evidence" value="ECO:0007669"/>
    <property type="project" value="UniProtKB-KW"/>
</dbReference>
<dbReference type="GO" id="GO:0008716">
    <property type="term" value="F:D-alanine-D-alanine ligase activity"/>
    <property type="evidence" value="ECO:0000318"/>
    <property type="project" value="GO_Central"/>
</dbReference>
<dbReference type="GO" id="GO:0046872">
    <property type="term" value="F:metal ion binding"/>
    <property type="evidence" value="ECO:0007669"/>
    <property type="project" value="UniProtKB-KW"/>
</dbReference>
<dbReference type="GO" id="GO:0071555">
    <property type="term" value="P:cell wall organization"/>
    <property type="evidence" value="ECO:0007669"/>
    <property type="project" value="UniProtKB-KW"/>
</dbReference>
<dbReference type="GO" id="GO:0009252">
    <property type="term" value="P:peptidoglycan biosynthetic process"/>
    <property type="evidence" value="ECO:0007669"/>
    <property type="project" value="UniProtKB-UniRule"/>
</dbReference>
<dbReference type="GO" id="GO:0008360">
    <property type="term" value="P:regulation of cell shape"/>
    <property type="evidence" value="ECO:0007669"/>
    <property type="project" value="UniProtKB-KW"/>
</dbReference>
<dbReference type="Gene3D" id="3.40.50.20">
    <property type="match status" value="1"/>
</dbReference>
<dbReference type="Gene3D" id="3.30.1490.20">
    <property type="entry name" value="ATP-grasp fold, A domain"/>
    <property type="match status" value="1"/>
</dbReference>
<dbReference type="Gene3D" id="3.30.470.20">
    <property type="entry name" value="ATP-grasp fold, B domain"/>
    <property type="match status" value="1"/>
</dbReference>
<dbReference type="HAMAP" id="MF_00047">
    <property type="entry name" value="Dala_Dala_lig"/>
    <property type="match status" value="1"/>
</dbReference>
<dbReference type="InterPro" id="IPR011761">
    <property type="entry name" value="ATP-grasp"/>
</dbReference>
<dbReference type="InterPro" id="IPR013815">
    <property type="entry name" value="ATP_grasp_subdomain_1"/>
</dbReference>
<dbReference type="InterPro" id="IPR000291">
    <property type="entry name" value="D-Ala_lig_Van_CS"/>
</dbReference>
<dbReference type="InterPro" id="IPR005905">
    <property type="entry name" value="D_ala_D_ala"/>
</dbReference>
<dbReference type="InterPro" id="IPR011095">
    <property type="entry name" value="Dala_Dala_lig_C"/>
</dbReference>
<dbReference type="InterPro" id="IPR011127">
    <property type="entry name" value="Dala_Dala_lig_N"/>
</dbReference>
<dbReference type="InterPro" id="IPR016185">
    <property type="entry name" value="PreATP-grasp_dom_sf"/>
</dbReference>
<dbReference type="NCBIfam" id="TIGR01205">
    <property type="entry name" value="D_ala_D_alaTIGR"/>
    <property type="match status" value="1"/>
</dbReference>
<dbReference type="NCBIfam" id="NF002378">
    <property type="entry name" value="PRK01372.1"/>
    <property type="match status" value="1"/>
</dbReference>
<dbReference type="NCBIfam" id="NF002528">
    <property type="entry name" value="PRK01966.1-4"/>
    <property type="match status" value="1"/>
</dbReference>
<dbReference type="NCBIfam" id="NF011170">
    <property type="entry name" value="PRK14572.1"/>
    <property type="match status" value="1"/>
</dbReference>
<dbReference type="PANTHER" id="PTHR23132">
    <property type="entry name" value="D-ALANINE--D-ALANINE LIGASE"/>
    <property type="match status" value="1"/>
</dbReference>
<dbReference type="PANTHER" id="PTHR23132:SF23">
    <property type="entry name" value="D-ALANINE--D-ALANINE LIGASE B"/>
    <property type="match status" value="1"/>
</dbReference>
<dbReference type="Pfam" id="PF07478">
    <property type="entry name" value="Dala_Dala_lig_C"/>
    <property type="match status" value="1"/>
</dbReference>
<dbReference type="Pfam" id="PF01820">
    <property type="entry name" value="Dala_Dala_lig_N"/>
    <property type="match status" value="1"/>
</dbReference>
<dbReference type="PIRSF" id="PIRSF039102">
    <property type="entry name" value="Ddl/VanB"/>
    <property type="match status" value="1"/>
</dbReference>
<dbReference type="SUPFAM" id="SSF56059">
    <property type="entry name" value="Glutathione synthetase ATP-binding domain-like"/>
    <property type="match status" value="1"/>
</dbReference>
<dbReference type="SUPFAM" id="SSF52440">
    <property type="entry name" value="PreATP-grasp domain"/>
    <property type="match status" value="1"/>
</dbReference>
<dbReference type="PROSITE" id="PS50975">
    <property type="entry name" value="ATP_GRASP"/>
    <property type="match status" value="1"/>
</dbReference>
<dbReference type="PROSITE" id="PS00843">
    <property type="entry name" value="DALA_DALA_LIGASE_1"/>
    <property type="match status" value="1"/>
</dbReference>
<dbReference type="PROSITE" id="PS00844">
    <property type="entry name" value="DALA_DALA_LIGASE_2"/>
    <property type="match status" value="1"/>
</dbReference>
<evidence type="ECO:0000250" key="1"/>
<evidence type="ECO:0000255" key="2">
    <source>
        <dbReference type="HAMAP-Rule" id="MF_00047"/>
    </source>
</evidence>
<name>DDL_LEPIN</name>
<comment type="function">
    <text evidence="2">Cell wall formation.</text>
</comment>
<comment type="catalytic activity">
    <reaction evidence="2">
        <text>2 D-alanine + ATP = D-alanyl-D-alanine + ADP + phosphate + H(+)</text>
        <dbReference type="Rhea" id="RHEA:11224"/>
        <dbReference type="ChEBI" id="CHEBI:15378"/>
        <dbReference type="ChEBI" id="CHEBI:30616"/>
        <dbReference type="ChEBI" id="CHEBI:43474"/>
        <dbReference type="ChEBI" id="CHEBI:57416"/>
        <dbReference type="ChEBI" id="CHEBI:57822"/>
        <dbReference type="ChEBI" id="CHEBI:456216"/>
        <dbReference type="EC" id="6.3.2.4"/>
    </reaction>
</comment>
<comment type="cofactor">
    <cofactor evidence="1">
        <name>Mg(2+)</name>
        <dbReference type="ChEBI" id="CHEBI:18420"/>
    </cofactor>
    <cofactor evidence="1">
        <name>Mn(2+)</name>
        <dbReference type="ChEBI" id="CHEBI:29035"/>
    </cofactor>
    <text evidence="1">Binds 2 magnesium or manganese ions per subunit.</text>
</comment>
<comment type="pathway">
    <text evidence="2">Cell wall biogenesis; peptidoglycan biosynthesis.</text>
</comment>
<comment type="subcellular location">
    <subcellularLocation>
        <location evidence="2">Cytoplasm</location>
    </subcellularLocation>
</comment>
<comment type="similarity">
    <text evidence="2">Belongs to the D-alanine--D-alanine ligase family.</text>
</comment>
<gene>
    <name evidence="2" type="primary">ddl</name>
    <name type="ordered locus">LA_2058</name>
</gene>
<accession>Q8F4I2</accession>
<proteinExistence type="inferred from homology"/>
<organism>
    <name type="scientific">Leptospira interrogans serogroup Icterohaemorrhagiae serovar Lai (strain 56601)</name>
    <dbReference type="NCBI Taxonomy" id="189518"/>
    <lineage>
        <taxon>Bacteria</taxon>
        <taxon>Pseudomonadati</taxon>
        <taxon>Spirochaetota</taxon>
        <taxon>Spirochaetia</taxon>
        <taxon>Leptospirales</taxon>
        <taxon>Leptospiraceae</taxon>
        <taxon>Leptospira</taxon>
    </lineage>
</organism>
<reference key="1">
    <citation type="journal article" date="2003" name="Nature">
        <title>Unique physiological and pathogenic features of Leptospira interrogans revealed by whole-genome sequencing.</title>
        <authorList>
            <person name="Ren S.-X."/>
            <person name="Fu G."/>
            <person name="Jiang X.-G."/>
            <person name="Zeng R."/>
            <person name="Miao Y.-G."/>
            <person name="Xu H."/>
            <person name="Zhang Y.-X."/>
            <person name="Xiong H."/>
            <person name="Lu G."/>
            <person name="Lu L.-F."/>
            <person name="Jiang H.-Q."/>
            <person name="Jia J."/>
            <person name="Tu Y.-F."/>
            <person name="Jiang J.-X."/>
            <person name="Gu W.-Y."/>
            <person name="Zhang Y.-Q."/>
            <person name="Cai Z."/>
            <person name="Sheng H.-H."/>
            <person name="Yin H.-F."/>
            <person name="Zhang Y."/>
            <person name="Zhu G.-F."/>
            <person name="Wan M."/>
            <person name="Huang H.-L."/>
            <person name="Qian Z."/>
            <person name="Wang S.-Y."/>
            <person name="Ma W."/>
            <person name="Yao Z.-J."/>
            <person name="Shen Y."/>
            <person name="Qiang B.-Q."/>
            <person name="Xia Q.-C."/>
            <person name="Guo X.-K."/>
            <person name="Danchin A."/>
            <person name="Saint Girons I."/>
            <person name="Somerville R.L."/>
            <person name="Wen Y.-M."/>
            <person name="Shi M.-H."/>
            <person name="Chen Z."/>
            <person name="Xu J.-G."/>
            <person name="Zhao G.-P."/>
        </authorList>
    </citation>
    <scope>NUCLEOTIDE SEQUENCE [LARGE SCALE GENOMIC DNA]</scope>
    <source>
        <strain>56601</strain>
    </source>
</reference>
<sequence>MAKIAVFFGGSSTEHSISILTGCFICKTLHTMGHSVKPILLTKDGGWVVPSEYRMSIPFEVSNSPDLFQEEFQKRYGVSRTNQIFSLDADIVFLGLHGGQGEDGTIQGFLEILGIPYTGSGVLASAIAMDKTRANQIFLQSGQKVAPFFEIDKLEYLNSTDAVITKLETLGFPQFLKPVEGGSSVSVYKITNREQLKEKLALIFESDSKVMSQSFLTGIEVSCGVLERYRDGKFKKIALPATEIVPGGEFFDFESKYKQGGSHEITPARISEQEMKRVQELAIAAHRSLGCSGYSRTDFIIVNGEPHILETNTLPGMTETSLIPQQAKAAGISMEEVFSDLIEIGLKRSLY</sequence>
<feature type="chain" id="PRO_0000177835" description="D-alanine--D-alanine ligase">
    <location>
        <begin position="1"/>
        <end position="351"/>
    </location>
</feature>
<feature type="domain" description="ATP-grasp" evidence="2">
    <location>
        <begin position="135"/>
        <end position="343"/>
    </location>
</feature>
<feature type="binding site" evidence="2">
    <location>
        <begin position="167"/>
        <end position="222"/>
    </location>
    <ligand>
        <name>ATP</name>
        <dbReference type="ChEBI" id="CHEBI:30616"/>
    </ligand>
</feature>
<feature type="binding site" evidence="2">
    <location>
        <position position="298"/>
    </location>
    <ligand>
        <name>Mg(2+)</name>
        <dbReference type="ChEBI" id="CHEBI:18420"/>
        <label>1</label>
    </ligand>
</feature>
<feature type="binding site" evidence="2">
    <location>
        <position position="310"/>
    </location>
    <ligand>
        <name>Mg(2+)</name>
        <dbReference type="ChEBI" id="CHEBI:18420"/>
        <label>1</label>
    </ligand>
</feature>
<feature type="binding site" evidence="2">
    <location>
        <position position="310"/>
    </location>
    <ligand>
        <name>Mg(2+)</name>
        <dbReference type="ChEBI" id="CHEBI:18420"/>
        <label>2</label>
    </ligand>
</feature>
<feature type="binding site" evidence="2">
    <location>
        <position position="312"/>
    </location>
    <ligand>
        <name>Mg(2+)</name>
        <dbReference type="ChEBI" id="CHEBI:18420"/>
        <label>2</label>
    </ligand>
</feature>